<sequence>MNTQQLAKLRSIVPEMRRVRHIHFVGIGGAGMGGIAEVLANEGYQISGSDLAPNPVTQQLTSLGATIFFNHRPENVRDASVVVVSSAISADNPEIVAAHEARIPVIRRAEMLAELMRFRHGIAIAGTHGKTTTTAMVSSIYAEAGLDPTFVNGGLVKAAGVHARLGHSRYLIAEADESDASFLHLQPMVAIVTNIEADHMDTYHGDFENLKQTFINFLHNLPFYGRAVMCVDDPVIRELLPRVGRQTTTYGFSEDADVRVEDYQQIGPQGHFTLLRQGMPDLHVTLNAPGRHNALNAAAAVAVATEEGIDDDAILRALESFQGTGRRFDFLGEFPLEPVNGKAGTAMLVDDYGHHPTEVDATIKAARAGWPDKNLVMLFQPHRYTRTRDLYDDFANVLTQVDALLMLDVYPAGEAPIPGADSRSLCRTIRNRGKIDPILVSDPAQVATMLAPVLTGNDLILVQGAGNVGKIARYLSEIKLKPQIQEEEQHG</sequence>
<evidence type="ECO:0000255" key="1">
    <source>
        <dbReference type="HAMAP-Rule" id="MF_00046"/>
    </source>
</evidence>
<protein>
    <recommendedName>
        <fullName evidence="1">UDP-N-acetylmuramate--L-alanine ligase</fullName>
        <ecNumber evidence="1">6.3.2.8</ecNumber>
    </recommendedName>
    <alternativeName>
        <fullName evidence="1">UDP-N-acetylmuramoyl-L-alanine synthetase</fullName>
    </alternativeName>
</protein>
<reference key="1">
    <citation type="journal article" date="2001" name="Nature">
        <title>Complete genome sequence of a multiple drug resistant Salmonella enterica serovar Typhi CT18.</title>
        <authorList>
            <person name="Parkhill J."/>
            <person name="Dougan G."/>
            <person name="James K.D."/>
            <person name="Thomson N.R."/>
            <person name="Pickard D."/>
            <person name="Wain J."/>
            <person name="Churcher C.M."/>
            <person name="Mungall K.L."/>
            <person name="Bentley S.D."/>
            <person name="Holden M.T.G."/>
            <person name="Sebaihia M."/>
            <person name="Baker S."/>
            <person name="Basham D."/>
            <person name="Brooks K."/>
            <person name="Chillingworth T."/>
            <person name="Connerton P."/>
            <person name="Cronin A."/>
            <person name="Davis P."/>
            <person name="Davies R.M."/>
            <person name="Dowd L."/>
            <person name="White N."/>
            <person name="Farrar J."/>
            <person name="Feltwell T."/>
            <person name="Hamlin N."/>
            <person name="Haque A."/>
            <person name="Hien T.T."/>
            <person name="Holroyd S."/>
            <person name="Jagels K."/>
            <person name="Krogh A."/>
            <person name="Larsen T.S."/>
            <person name="Leather S."/>
            <person name="Moule S."/>
            <person name="O'Gaora P."/>
            <person name="Parry C."/>
            <person name="Quail M.A."/>
            <person name="Rutherford K.M."/>
            <person name="Simmonds M."/>
            <person name="Skelton J."/>
            <person name="Stevens K."/>
            <person name="Whitehead S."/>
            <person name="Barrell B.G."/>
        </authorList>
    </citation>
    <scope>NUCLEOTIDE SEQUENCE [LARGE SCALE GENOMIC DNA]</scope>
    <source>
        <strain>CT18</strain>
    </source>
</reference>
<reference key="2">
    <citation type="journal article" date="2003" name="J. Bacteriol.">
        <title>Comparative genomics of Salmonella enterica serovar Typhi strains Ty2 and CT18.</title>
        <authorList>
            <person name="Deng W."/>
            <person name="Liou S.-R."/>
            <person name="Plunkett G. III"/>
            <person name="Mayhew G.F."/>
            <person name="Rose D.J."/>
            <person name="Burland V."/>
            <person name="Kodoyianni V."/>
            <person name="Schwartz D.C."/>
            <person name="Blattner F.R."/>
        </authorList>
    </citation>
    <scope>NUCLEOTIDE SEQUENCE [LARGE SCALE GENOMIC DNA]</scope>
    <source>
        <strain>ATCC 700931 / Ty2</strain>
    </source>
</reference>
<feature type="chain" id="PRO_0000182147" description="UDP-N-acetylmuramate--L-alanine ligase">
    <location>
        <begin position="1"/>
        <end position="491"/>
    </location>
</feature>
<feature type="binding site" evidence="1">
    <location>
        <begin position="126"/>
        <end position="132"/>
    </location>
    <ligand>
        <name>ATP</name>
        <dbReference type="ChEBI" id="CHEBI:30616"/>
    </ligand>
</feature>
<organism>
    <name type="scientific">Salmonella typhi</name>
    <dbReference type="NCBI Taxonomy" id="90370"/>
    <lineage>
        <taxon>Bacteria</taxon>
        <taxon>Pseudomonadati</taxon>
        <taxon>Pseudomonadota</taxon>
        <taxon>Gammaproteobacteria</taxon>
        <taxon>Enterobacterales</taxon>
        <taxon>Enterobacteriaceae</taxon>
        <taxon>Salmonella</taxon>
    </lineage>
</organism>
<accession>Q8Z9G8</accession>
<gene>
    <name evidence="1" type="primary">murC</name>
    <name type="ordered locus">STY0149</name>
    <name type="ordered locus">t0133</name>
</gene>
<proteinExistence type="inferred from homology"/>
<keyword id="KW-0067">ATP-binding</keyword>
<keyword id="KW-0131">Cell cycle</keyword>
<keyword id="KW-0132">Cell division</keyword>
<keyword id="KW-0133">Cell shape</keyword>
<keyword id="KW-0961">Cell wall biogenesis/degradation</keyword>
<keyword id="KW-0963">Cytoplasm</keyword>
<keyword id="KW-0436">Ligase</keyword>
<keyword id="KW-0547">Nucleotide-binding</keyword>
<keyword id="KW-0573">Peptidoglycan synthesis</keyword>
<comment type="function">
    <text evidence="1">Cell wall formation.</text>
</comment>
<comment type="catalytic activity">
    <reaction evidence="1">
        <text>UDP-N-acetyl-alpha-D-muramate + L-alanine + ATP = UDP-N-acetyl-alpha-D-muramoyl-L-alanine + ADP + phosphate + H(+)</text>
        <dbReference type="Rhea" id="RHEA:23372"/>
        <dbReference type="ChEBI" id="CHEBI:15378"/>
        <dbReference type="ChEBI" id="CHEBI:30616"/>
        <dbReference type="ChEBI" id="CHEBI:43474"/>
        <dbReference type="ChEBI" id="CHEBI:57972"/>
        <dbReference type="ChEBI" id="CHEBI:70757"/>
        <dbReference type="ChEBI" id="CHEBI:83898"/>
        <dbReference type="ChEBI" id="CHEBI:456216"/>
        <dbReference type="EC" id="6.3.2.8"/>
    </reaction>
</comment>
<comment type="pathway">
    <text evidence="1">Cell wall biogenesis; peptidoglycan biosynthesis.</text>
</comment>
<comment type="subcellular location">
    <subcellularLocation>
        <location evidence="1">Cytoplasm</location>
    </subcellularLocation>
</comment>
<comment type="similarity">
    <text evidence="1">Belongs to the MurCDEF family.</text>
</comment>
<dbReference type="EC" id="6.3.2.8" evidence="1"/>
<dbReference type="EMBL" id="AL513382">
    <property type="protein sequence ID" value="CAD01286.1"/>
    <property type="molecule type" value="Genomic_DNA"/>
</dbReference>
<dbReference type="EMBL" id="AE014613">
    <property type="protein sequence ID" value="AAO67865.1"/>
    <property type="molecule type" value="Genomic_DNA"/>
</dbReference>
<dbReference type="RefSeq" id="NP_454741.1">
    <property type="nucleotide sequence ID" value="NC_003198.1"/>
</dbReference>
<dbReference type="RefSeq" id="WP_001096072.1">
    <property type="nucleotide sequence ID" value="NZ_WSUR01000009.1"/>
</dbReference>
<dbReference type="SMR" id="Q8Z9G8"/>
<dbReference type="STRING" id="220341.gene:17584188"/>
<dbReference type="KEGG" id="stt:t0133"/>
<dbReference type="KEGG" id="sty:STY0149"/>
<dbReference type="PATRIC" id="fig|220341.7.peg.149"/>
<dbReference type="eggNOG" id="COG0773">
    <property type="taxonomic scope" value="Bacteria"/>
</dbReference>
<dbReference type="HOGENOM" id="CLU_028104_2_2_6"/>
<dbReference type="OMA" id="DITYQLR"/>
<dbReference type="OrthoDB" id="9804126at2"/>
<dbReference type="UniPathway" id="UPA00219"/>
<dbReference type="Proteomes" id="UP000000541">
    <property type="component" value="Chromosome"/>
</dbReference>
<dbReference type="Proteomes" id="UP000002670">
    <property type="component" value="Chromosome"/>
</dbReference>
<dbReference type="GO" id="GO:0005737">
    <property type="term" value="C:cytoplasm"/>
    <property type="evidence" value="ECO:0007669"/>
    <property type="project" value="UniProtKB-SubCell"/>
</dbReference>
<dbReference type="GO" id="GO:0005524">
    <property type="term" value="F:ATP binding"/>
    <property type="evidence" value="ECO:0007669"/>
    <property type="project" value="UniProtKB-UniRule"/>
</dbReference>
<dbReference type="GO" id="GO:0008763">
    <property type="term" value="F:UDP-N-acetylmuramate-L-alanine ligase activity"/>
    <property type="evidence" value="ECO:0007669"/>
    <property type="project" value="UniProtKB-UniRule"/>
</dbReference>
<dbReference type="GO" id="GO:0051301">
    <property type="term" value="P:cell division"/>
    <property type="evidence" value="ECO:0007669"/>
    <property type="project" value="UniProtKB-KW"/>
</dbReference>
<dbReference type="GO" id="GO:0071555">
    <property type="term" value="P:cell wall organization"/>
    <property type="evidence" value="ECO:0007669"/>
    <property type="project" value="UniProtKB-KW"/>
</dbReference>
<dbReference type="GO" id="GO:0009252">
    <property type="term" value="P:peptidoglycan biosynthetic process"/>
    <property type="evidence" value="ECO:0007669"/>
    <property type="project" value="UniProtKB-UniRule"/>
</dbReference>
<dbReference type="GO" id="GO:0008360">
    <property type="term" value="P:regulation of cell shape"/>
    <property type="evidence" value="ECO:0007669"/>
    <property type="project" value="UniProtKB-KW"/>
</dbReference>
<dbReference type="FunFam" id="3.40.1190.10:FF:000001">
    <property type="entry name" value="UDP-N-acetylmuramate--L-alanine ligase"/>
    <property type="match status" value="1"/>
</dbReference>
<dbReference type="FunFam" id="3.40.50.720:FF:000046">
    <property type="entry name" value="UDP-N-acetylmuramate--L-alanine ligase"/>
    <property type="match status" value="1"/>
</dbReference>
<dbReference type="FunFam" id="3.90.190.20:FF:000001">
    <property type="entry name" value="UDP-N-acetylmuramate--L-alanine ligase"/>
    <property type="match status" value="1"/>
</dbReference>
<dbReference type="Gene3D" id="3.90.190.20">
    <property type="entry name" value="Mur ligase, C-terminal domain"/>
    <property type="match status" value="1"/>
</dbReference>
<dbReference type="Gene3D" id="3.40.1190.10">
    <property type="entry name" value="Mur-like, catalytic domain"/>
    <property type="match status" value="1"/>
</dbReference>
<dbReference type="Gene3D" id="3.40.50.720">
    <property type="entry name" value="NAD(P)-binding Rossmann-like Domain"/>
    <property type="match status" value="1"/>
</dbReference>
<dbReference type="HAMAP" id="MF_00046">
    <property type="entry name" value="MurC"/>
    <property type="match status" value="1"/>
</dbReference>
<dbReference type="InterPro" id="IPR036565">
    <property type="entry name" value="Mur-like_cat_sf"/>
</dbReference>
<dbReference type="InterPro" id="IPR004101">
    <property type="entry name" value="Mur_ligase_C"/>
</dbReference>
<dbReference type="InterPro" id="IPR036615">
    <property type="entry name" value="Mur_ligase_C_dom_sf"/>
</dbReference>
<dbReference type="InterPro" id="IPR013221">
    <property type="entry name" value="Mur_ligase_cen"/>
</dbReference>
<dbReference type="InterPro" id="IPR000713">
    <property type="entry name" value="Mur_ligase_N"/>
</dbReference>
<dbReference type="InterPro" id="IPR050061">
    <property type="entry name" value="MurCDEF_pg_biosynth"/>
</dbReference>
<dbReference type="InterPro" id="IPR005758">
    <property type="entry name" value="UDP-N-AcMur_Ala_ligase_MurC"/>
</dbReference>
<dbReference type="NCBIfam" id="TIGR01082">
    <property type="entry name" value="murC"/>
    <property type="match status" value="1"/>
</dbReference>
<dbReference type="PANTHER" id="PTHR43445:SF3">
    <property type="entry name" value="UDP-N-ACETYLMURAMATE--L-ALANINE LIGASE"/>
    <property type="match status" value="1"/>
</dbReference>
<dbReference type="PANTHER" id="PTHR43445">
    <property type="entry name" value="UDP-N-ACETYLMURAMATE--L-ALANINE LIGASE-RELATED"/>
    <property type="match status" value="1"/>
</dbReference>
<dbReference type="Pfam" id="PF01225">
    <property type="entry name" value="Mur_ligase"/>
    <property type="match status" value="1"/>
</dbReference>
<dbReference type="Pfam" id="PF02875">
    <property type="entry name" value="Mur_ligase_C"/>
    <property type="match status" value="1"/>
</dbReference>
<dbReference type="Pfam" id="PF08245">
    <property type="entry name" value="Mur_ligase_M"/>
    <property type="match status" value="1"/>
</dbReference>
<dbReference type="SUPFAM" id="SSF51984">
    <property type="entry name" value="MurCD N-terminal domain"/>
    <property type="match status" value="1"/>
</dbReference>
<dbReference type="SUPFAM" id="SSF53623">
    <property type="entry name" value="MurD-like peptide ligases, catalytic domain"/>
    <property type="match status" value="1"/>
</dbReference>
<dbReference type="SUPFAM" id="SSF53244">
    <property type="entry name" value="MurD-like peptide ligases, peptide-binding domain"/>
    <property type="match status" value="1"/>
</dbReference>
<name>MURC_SALTI</name>